<name>CH10_SHELP</name>
<organism>
    <name type="scientific">Shewanella loihica (strain ATCC BAA-1088 / PV-4)</name>
    <dbReference type="NCBI Taxonomy" id="323850"/>
    <lineage>
        <taxon>Bacteria</taxon>
        <taxon>Pseudomonadati</taxon>
        <taxon>Pseudomonadota</taxon>
        <taxon>Gammaproteobacteria</taxon>
        <taxon>Alteromonadales</taxon>
        <taxon>Shewanellaceae</taxon>
        <taxon>Shewanella</taxon>
    </lineage>
</organism>
<reference key="1">
    <citation type="submission" date="2007-03" db="EMBL/GenBank/DDBJ databases">
        <title>Complete sequence of Shewanella loihica PV-4.</title>
        <authorList>
            <consortium name="US DOE Joint Genome Institute"/>
            <person name="Copeland A."/>
            <person name="Lucas S."/>
            <person name="Lapidus A."/>
            <person name="Barry K."/>
            <person name="Detter J.C."/>
            <person name="Glavina del Rio T."/>
            <person name="Hammon N."/>
            <person name="Israni S."/>
            <person name="Dalin E."/>
            <person name="Tice H."/>
            <person name="Pitluck S."/>
            <person name="Chain P."/>
            <person name="Malfatti S."/>
            <person name="Shin M."/>
            <person name="Vergez L."/>
            <person name="Schmutz J."/>
            <person name="Larimer F."/>
            <person name="Land M."/>
            <person name="Hauser L."/>
            <person name="Kyrpides N."/>
            <person name="Mikhailova N."/>
            <person name="Romine M.F."/>
            <person name="Serres G."/>
            <person name="Fredrickson J."/>
            <person name="Tiedje J."/>
            <person name="Richardson P."/>
        </authorList>
    </citation>
    <scope>NUCLEOTIDE SEQUENCE [LARGE SCALE GENOMIC DNA]</scope>
    <source>
        <strain>ATCC BAA-1088 / PV-4</strain>
    </source>
</reference>
<evidence type="ECO:0000255" key="1">
    <source>
        <dbReference type="HAMAP-Rule" id="MF_00580"/>
    </source>
</evidence>
<dbReference type="EMBL" id="CP000606">
    <property type="protein sequence ID" value="ABO22343.1"/>
    <property type="molecule type" value="Genomic_DNA"/>
</dbReference>
<dbReference type="RefSeq" id="WP_011864277.1">
    <property type="nucleotide sequence ID" value="NC_009092.1"/>
</dbReference>
<dbReference type="SMR" id="A3QA45"/>
<dbReference type="STRING" id="323850.Shew_0471"/>
<dbReference type="KEGG" id="slo:Shew_0471"/>
<dbReference type="eggNOG" id="COG0234">
    <property type="taxonomic scope" value="Bacteria"/>
</dbReference>
<dbReference type="HOGENOM" id="CLU_132825_1_1_6"/>
<dbReference type="OrthoDB" id="9806791at2"/>
<dbReference type="Proteomes" id="UP000001558">
    <property type="component" value="Chromosome"/>
</dbReference>
<dbReference type="GO" id="GO:0005737">
    <property type="term" value="C:cytoplasm"/>
    <property type="evidence" value="ECO:0007669"/>
    <property type="project" value="UniProtKB-SubCell"/>
</dbReference>
<dbReference type="GO" id="GO:0005524">
    <property type="term" value="F:ATP binding"/>
    <property type="evidence" value="ECO:0007669"/>
    <property type="project" value="InterPro"/>
</dbReference>
<dbReference type="GO" id="GO:0046872">
    <property type="term" value="F:metal ion binding"/>
    <property type="evidence" value="ECO:0007669"/>
    <property type="project" value="TreeGrafter"/>
</dbReference>
<dbReference type="GO" id="GO:0044183">
    <property type="term" value="F:protein folding chaperone"/>
    <property type="evidence" value="ECO:0007669"/>
    <property type="project" value="InterPro"/>
</dbReference>
<dbReference type="GO" id="GO:0051087">
    <property type="term" value="F:protein-folding chaperone binding"/>
    <property type="evidence" value="ECO:0007669"/>
    <property type="project" value="TreeGrafter"/>
</dbReference>
<dbReference type="GO" id="GO:0051082">
    <property type="term" value="F:unfolded protein binding"/>
    <property type="evidence" value="ECO:0007669"/>
    <property type="project" value="TreeGrafter"/>
</dbReference>
<dbReference type="GO" id="GO:0051085">
    <property type="term" value="P:chaperone cofactor-dependent protein refolding"/>
    <property type="evidence" value="ECO:0007669"/>
    <property type="project" value="TreeGrafter"/>
</dbReference>
<dbReference type="CDD" id="cd00320">
    <property type="entry name" value="cpn10"/>
    <property type="match status" value="1"/>
</dbReference>
<dbReference type="FunFam" id="2.30.33.40:FF:000001">
    <property type="entry name" value="10 kDa chaperonin"/>
    <property type="match status" value="1"/>
</dbReference>
<dbReference type="Gene3D" id="2.30.33.40">
    <property type="entry name" value="GroES chaperonin"/>
    <property type="match status" value="1"/>
</dbReference>
<dbReference type="HAMAP" id="MF_00580">
    <property type="entry name" value="CH10"/>
    <property type="match status" value="1"/>
</dbReference>
<dbReference type="InterPro" id="IPR020818">
    <property type="entry name" value="Chaperonin_GroES"/>
</dbReference>
<dbReference type="InterPro" id="IPR037124">
    <property type="entry name" value="Chaperonin_GroES_sf"/>
</dbReference>
<dbReference type="InterPro" id="IPR018369">
    <property type="entry name" value="Chaprnonin_Cpn10_CS"/>
</dbReference>
<dbReference type="InterPro" id="IPR011032">
    <property type="entry name" value="GroES-like_sf"/>
</dbReference>
<dbReference type="NCBIfam" id="NF001526">
    <property type="entry name" value="PRK00364.1-1"/>
    <property type="match status" value="1"/>
</dbReference>
<dbReference type="NCBIfam" id="NF001527">
    <property type="entry name" value="PRK00364.1-2"/>
    <property type="match status" value="1"/>
</dbReference>
<dbReference type="NCBIfam" id="NF001531">
    <property type="entry name" value="PRK00364.2-2"/>
    <property type="match status" value="1"/>
</dbReference>
<dbReference type="PANTHER" id="PTHR10772">
    <property type="entry name" value="10 KDA HEAT SHOCK PROTEIN"/>
    <property type="match status" value="1"/>
</dbReference>
<dbReference type="PANTHER" id="PTHR10772:SF58">
    <property type="entry name" value="CO-CHAPERONIN GROES"/>
    <property type="match status" value="1"/>
</dbReference>
<dbReference type="Pfam" id="PF00166">
    <property type="entry name" value="Cpn10"/>
    <property type="match status" value="1"/>
</dbReference>
<dbReference type="PRINTS" id="PR00297">
    <property type="entry name" value="CHAPERONIN10"/>
</dbReference>
<dbReference type="SMART" id="SM00883">
    <property type="entry name" value="Cpn10"/>
    <property type="match status" value="1"/>
</dbReference>
<dbReference type="SUPFAM" id="SSF50129">
    <property type="entry name" value="GroES-like"/>
    <property type="match status" value="1"/>
</dbReference>
<dbReference type="PROSITE" id="PS00681">
    <property type="entry name" value="CHAPERONINS_CPN10"/>
    <property type="match status" value="1"/>
</dbReference>
<proteinExistence type="inferred from homology"/>
<accession>A3QA45</accession>
<gene>
    <name evidence="1" type="primary">groES</name>
    <name evidence="1" type="synonym">groS</name>
    <name type="ordered locus">Shew_0471</name>
</gene>
<comment type="function">
    <text evidence="1">Together with the chaperonin GroEL, plays an essential role in assisting protein folding. The GroEL-GroES system forms a nano-cage that allows encapsulation of the non-native substrate proteins and provides a physical environment optimized to promote and accelerate protein folding. GroES binds to the apical surface of the GroEL ring, thereby capping the opening of the GroEL channel.</text>
</comment>
<comment type="subunit">
    <text evidence="1">Heptamer of 7 subunits arranged in a ring. Interacts with the chaperonin GroEL.</text>
</comment>
<comment type="subcellular location">
    <subcellularLocation>
        <location evidence="1">Cytoplasm</location>
    </subcellularLocation>
</comment>
<comment type="similarity">
    <text evidence="1">Belongs to the GroES chaperonin family.</text>
</comment>
<feature type="chain" id="PRO_1000025363" description="Co-chaperonin GroES">
    <location>
        <begin position="1"/>
        <end position="96"/>
    </location>
</feature>
<keyword id="KW-0143">Chaperone</keyword>
<keyword id="KW-0963">Cytoplasm</keyword>
<keyword id="KW-1185">Reference proteome</keyword>
<protein>
    <recommendedName>
        <fullName evidence="1">Co-chaperonin GroES</fullName>
    </recommendedName>
    <alternativeName>
        <fullName evidence="1">10 kDa chaperonin</fullName>
    </alternativeName>
    <alternativeName>
        <fullName evidence="1">Chaperonin-10</fullName>
        <shortName evidence="1">Cpn10</shortName>
    </alternativeName>
</protein>
<sequence length="96" mass="10274">MNIRPLHDRVIVKRSEVESKSAGGIVLTGSAAEQSTRGEVLAVGNGRILENGTVQPLDVKVGDIVIFNEGYGVKKEKIDGQEVLILSESDLMAVVE</sequence>